<gene>
    <name evidence="1" type="primary">iolA1</name>
    <name type="ordered locus">BT9727_2130</name>
</gene>
<name>IOLA1_BACHK</name>
<protein>
    <recommendedName>
        <fullName evidence="1">Malonate-semialdehyde dehydrogenase 1</fullName>
        <shortName evidence="1">MSA dehydrogenase 1</shortName>
        <ecNumber evidence="1">1.2.1.27</ecNumber>
    </recommendedName>
    <alternativeName>
        <fullName evidence="1">Methylmalonate-semialdehyde dehydrogenase 1</fullName>
        <shortName evidence="1">MMSA dehydrogenase 1</shortName>
        <shortName evidence="1">MSDH 1</shortName>
    </alternativeName>
</protein>
<keyword id="KW-0520">NAD</keyword>
<keyword id="KW-0560">Oxidoreductase</keyword>
<evidence type="ECO:0000255" key="1">
    <source>
        <dbReference type="HAMAP-Rule" id="MF_01670"/>
    </source>
</evidence>
<reference key="1">
    <citation type="journal article" date="2006" name="J. Bacteriol.">
        <title>Pathogenomic sequence analysis of Bacillus cereus and Bacillus thuringiensis isolates closely related to Bacillus anthracis.</title>
        <authorList>
            <person name="Han C.S."/>
            <person name="Xie G."/>
            <person name="Challacombe J.F."/>
            <person name="Altherr M.R."/>
            <person name="Bhotika S.S."/>
            <person name="Bruce D."/>
            <person name="Campbell C.S."/>
            <person name="Campbell M.L."/>
            <person name="Chen J."/>
            <person name="Chertkov O."/>
            <person name="Cleland C."/>
            <person name="Dimitrijevic M."/>
            <person name="Doggett N.A."/>
            <person name="Fawcett J.J."/>
            <person name="Glavina T."/>
            <person name="Goodwin L.A."/>
            <person name="Hill K.K."/>
            <person name="Hitchcock P."/>
            <person name="Jackson P.J."/>
            <person name="Keim P."/>
            <person name="Kewalramani A.R."/>
            <person name="Longmire J."/>
            <person name="Lucas S."/>
            <person name="Malfatti S."/>
            <person name="McMurry K."/>
            <person name="Meincke L.J."/>
            <person name="Misra M."/>
            <person name="Moseman B.L."/>
            <person name="Mundt M."/>
            <person name="Munk A.C."/>
            <person name="Okinaka R.T."/>
            <person name="Parson-Quintana B."/>
            <person name="Reilly L.P."/>
            <person name="Richardson P."/>
            <person name="Robinson D.L."/>
            <person name="Rubin E."/>
            <person name="Saunders E."/>
            <person name="Tapia R."/>
            <person name="Tesmer J.G."/>
            <person name="Thayer N."/>
            <person name="Thompson L.S."/>
            <person name="Tice H."/>
            <person name="Ticknor L.O."/>
            <person name="Wills P.L."/>
            <person name="Brettin T.S."/>
            <person name="Gilna P."/>
        </authorList>
    </citation>
    <scope>NUCLEOTIDE SEQUENCE [LARGE SCALE GENOMIC DNA]</scope>
    <source>
        <strain>97-27</strain>
    </source>
</reference>
<organism>
    <name type="scientific">Bacillus thuringiensis subsp. konkukian (strain 97-27)</name>
    <dbReference type="NCBI Taxonomy" id="281309"/>
    <lineage>
        <taxon>Bacteria</taxon>
        <taxon>Bacillati</taxon>
        <taxon>Bacillota</taxon>
        <taxon>Bacilli</taxon>
        <taxon>Bacillales</taxon>
        <taxon>Bacillaceae</taxon>
        <taxon>Bacillus</taxon>
        <taxon>Bacillus cereus group</taxon>
    </lineage>
</organism>
<accession>Q6HJ19</accession>
<sequence length="486" mass="52975">MITTEIKRVKNHINGEWVESTGTEVEAVPNPATGKIIAYVPLSPKEDVEKAVEAAKAAYETWSKVPVPNRSRQLYKYLQLLQENKEELAKIITLENGKTLTDATGEVQRGIEAVELATSAPNLMMGQALPNIASGIDGSIWRYPIGVVAGITPFNFPMMIPLWMFPLAIACGNTFVLKTSERTPLLAERLVELFYEAGFPKGVLNLVQGGKDVVNSILENKDIQAVSFVGSEPVARYVYETGTKHGKRVQALAGAKNHAIVMPDCNLEKTVQGVIGSAFASSGERCMACSVVAVVDEIADEFIDVLVAETKKLKVGDGFHEDNYVGPLIRESHKERVLGYINSGVADGATLLVDGRKIKEEVGEGYFVGATIFDGVNQEMKIWQDEIFAPVLSIVRVKDLEEGIKLTNQSKFANGAVIYTSNGKHAQTFRDNIDAGMIGVNVNVPAPMAFFAFAGNKASFFGDLGTNGTDGVQFYTRKKVVTERWF</sequence>
<dbReference type="EC" id="1.2.1.27" evidence="1"/>
<dbReference type="EMBL" id="AE017355">
    <property type="protein sequence ID" value="AAT59833.1"/>
    <property type="molecule type" value="Genomic_DNA"/>
</dbReference>
<dbReference type="RefSeq" id="WP_000633351.1">
    <property type="nucleotide sequence ID" value="NC_005957.1"/>
</dbReference>
<dbReference type="RefSeq" id="YP_036457.1">
    <property type="nucleotide sequence ID" value="NC_005957.1"/>
</dbReference>
<dbReference type="SMR" id="Q6HJ19"/>
<dbReference type="KEGG" id="btk:BT9727_2130"/>
<dbReference type="PATRIC" id="fig|281309.8.peg.2242"/>
<dbReference type="HOGENOM" id="CLU_005391_1_10_9"/>
<dbReference type="UniPathway" id="UPA00076">
    <property type="reaction ID" value="UER00148"/>
</dbReference>
<dbReference type="Proteomes" id="UP000001301">
    <property type="component" value="Chromosome"/>
</dbReference>
<dbReference type="GO" id="GO:0018478">
    <property type="term" value="F:malonate-semialdehyde dehydrogenase (acetylating) activity"/>
    <property type="evidence" value="ECO:0007669"/>
    <property type="project" value="UniProtKB-UniRule"/>
</dbReference>
<dbReference type="GO" id="GO:0004491">
    <property type="term" value="F:methylmalonate-semialdehyde dehydrogenase (acylating, NAD) activity"/>
    <property type="evidence" value="ECO:0007669"/>
    <property type="project" value="UniProtKB-UniRule"/>
</dbReference>
<dbReference type="GO" id="GO:0019310">
    <property type="term" value="P:inositol catabolic process"/>
    <property type="evidence" value="ECO:0007669"/>
    <property type="project" value="UniProtKB-UniRule"/>
</dbReference>
<dbReference type="GO" id="GO:0006210">
    <property type="term" value="P:thymine catabolic process"/>
    <property type="evidence" value="ECO:0007669"/>
    <property type="project" value="TreeGrafter"/>
</dbReference>
<dbReference type="GO" id="GO:0006574">
    <property type="term" value="P:valine catabolic process"/>
    <property type="evidence" value="ECO:0007669"/>
    <property type="project" value="TreeGrafter"/>
</dbReference>
<dbReference type="CDD" id="cd07085">
    <property type="entry name" value="ALDH_F6_MMSDH"/>
    <property type="match status" value="1"/>
</dbReference>
<dbReference type="FunFam" id="3.40.309.10:FF:000002">
    <property type="entry name" value="Methylmalonate-semialdehyde dehydrogenase (Acylating)"/>
    <property type="match status" value="1"/>
</dbReference>
<dbReference type="FunFam" id="3.40.605.10:FF:000003">
    <property type="entry name" value="Methylmalonate-semialdehyde dehydrogenase [acylating]"/>
    <property type="match status" value="1"/>
</dbReference>
<dbReference type="Gene3D" id="3.40.605.10">
    <property type="entry name" value="Aldehyde Dehydrogenase, Chain A, domain 1"/>
    <property type="match status" value="1"/>
</dbReference>
<dbReference type="Gene3D" id="3.40.309.10">
    <property type="entry name" value="Aldehyde Dehydrogenase, Chain A, domain 2"/>
    <property type="match status" value="1"/>
</dbReference>
<dbReference type="HAMAP" id="MF_01670">
    <property type="entry name" value="IolA"/>
    <property type="match status" value="1"/>
</dbReference>
<dbReference type="InterPro" id="IPR016161">
    <property type="entry name" value="Ald_DH/histidinol_DH"/>
</dbReference>
<dbReference type="InterPro" id="IPR016163">
    <property type="entry name" value="Ald_DH_C"/>
</dbReference>
<dbReference type="InterPro" id="IPR016160">
    <property type="entry name" value="Ald_DH_CS_CYS"/>
</dbReference>
<dbReference type="InterPro" id="IPR016162">
    <property type="entry name" value="Ald_DH_N"/>
</dbReference>
<dbReference type="InterPro" id="IPR015590">
    <property type="entry name" value="Aldehyde_DH_dom"/>
</dbReference>
<dbReference type="InterPro" id="IPR010061">
    <property type="entry name" value="MeMal-semiAld_DH"/>
</dbReference>
<dbReference type="InterPro" id="IPR023510">
    <property type="entry name" value="MSDH_GmP_bac"/>
</dbReference>
<dbReference type="NCBIfam" id="TIGR01722">
    <property type="entry name" value="MMSDH"/>
    <property type="match status" value="1"/>
</dbReference>
<dbReference type="PANTHER" id="PTHR43866">
    <property type="entry name" value="MALONATE-SEMIALDEHYDE DEHYDROGENASE"/>
    <property type="match status" value="1"/>
</dbReference>
<dbReference type="PANTHER" id="PTHR43866:SF4">
    <property type="entry name" value="MALONATE-SEMIALDEHYDE DEHYDROGENASE"/>
    <property type="match status" value="1"/>
</dbReference>
<dbReference type="Pfam" id="PF00171">
    <property type="entry name" value="Aldedh"/>
    <property type="match status" value="1"/>
</dbReference>
<dbReference type="SUPFAM" id="SSF53720">
    <property type="entry name" value="ALDH-like"/>
    <property type="match status" value="1"/>
</dbReference>
<dbReference type="PROSITE" id="PS00070">
    <property type="entry name" value="ALDEHYDE_DEHYDR_CYS"/>
    <property type="match status" value="1"/>
</dbReference>
<feature type="chain" id="PRO_0000352335" description="Malonate-semialdehyde dehydrogenase 1">
    <location>
        <begin position="1"/>
        <end position="486"/>
    </location>
</feature>
<feature type="active site" description="Nucleophile" evidence="1">
    <location>
        <position position="286"/>
    </location>
</feature>
<feature type="binding site" evidence="1">
    <location>
        <position position="154"/>
    </location>
    <ligand>
        <name>NAD(+)</name>
        <dbReference type="ChEBI" id="CHEBI:57540"/>
    </ligand>
</feature>
<feature type="binding site" evidence="1">
    <location>
        <position position="178"/>
    </location>
    <ligand>
        <name>NAD(+)</name>
        <dbReference type="ChEBI" id="CHEBI:57540"/>
    </ligand>
</feature>
<feature type="binding site" evidence="1">
    <location>
        <position position="181"/>
    </location>
    <ligand>
        <name>NAD(+)</name>
        <dbReference type="ChEBI" id="CHEBI:57540"/>
    </ligand>
</feature>
<feature type="binding site" evidence="1">
    <location>
        <position position="182"/>
    </location>
    <ligand>
        <name>NAD(+)</name>
        <dbReference type="ChEBI" id="CHEBI:57540"/>
    </ligand>
</feature>
<feature type="binding site" evidence="1">
    <location>
        <position position="231"/>
    </location>
    <ligand>
        <name>NAD(+)</name>
        <dbReference type="ChEBI" id="CHEBI:57540"/>
    </ligand>
</feature>
<feature type="binding site" evidence="1">
    <location>
        <position position="386"/>
    </location>
    <ligand>
        <name>NAD(+)</name>
        <dbReference type="ChEBI" id="CHEBI:57540"/>
    </ligand>
</feature>
<proteinExistence type="inferred from homology"/>
<comment type="function">
    <text evidence="1">Catalyzes the oxidation of malonate semialdehyde (MSA) and methylmalonate semialdehyde (MMSA) into acetyl-CoA and propanoyl-CoA, respectively. Is involved in a myo-inositol catabolic pathway. Bicarbonate, and not CO2, is the end-product of the enzymatic reaction.</text>
</comment>
<comment type="catalytic activity">
    <reaction evidence="1">
        <text>3-oxopropanoate + NAD(+) + CoA + H2O = hydrogencarbonate + acetyl-CoA + NADH + H(+)</text>
        <dbReference type="Rhea" id="RHEA:76615"/>
        <dbReference type="ChEBI" id="CHEBI:15377"/>
        <dbReference type="ChEBI" id="CHEBI:15378"/>
        <dbReference type="ChEBI" id="CHEBI:17544"/>
        <dbReference type="ChEBI" id="CHEBI:33190"/>
        <dbReference type="ChEBI" id="CHEBI:57287"/>
        <dbReference type="ChEBI" id="CHEBI:57288"/>
        <dbReference type="ChEBI" id="CHEBI:57540"/>
        <dbReference type="ChEBI" id="CHEBI:57945"/>
        <dbReference type="EC" id="1.2.1.27"/>
    </reaction>
    <physiologicalReaction direction="left-to-right" evidence="1">
        <dbReference type="Rhea" id="RHEA:76616"/>
    </physiologicalReaction>
</comment>
<comment type="catalytic activity">
    <reaction evidence="1">
        <text>2-methyl-3-oxopropanoate + NAD(+) + CoA + H2O = propanoyl-CoA + hydrogencarbonate + NADH + H(+)</text>
        <dbReference type="Rhea" id="RHEA:20804"/>
        <dbReference type="ChEBI" id="CHEBI:15377"/>
        <dbReference type="ChEBI" id="CHEBI:15378"/>
        <dbReference type="ChEBI" id="CHEBI:17544"/>
        <dbReference type="ChEBI" id="CHEBI:57287"/>
        <dbReference type="ChEBI" id="CHEBI:57392"/>
        <dbReference type="ChEBI" id="CHEBI:57540"/>
        <dbReference type="ChEBI" id="CHEBI:57700"/>
        <dbReference type="ChEBI" id="CHEBI:57945"/>
        <dbReference type="EC" id="1.2.1.27"/>
    </reaction>
    <physiologicalReaction direction="left-to-right" evidence="1">
        <dbReference type="Rhea" id="RHEA:20805"/>
    </physiologicalReaction>
</comment>
<comment type="pathway">
    <text evidence="1">Polyol metabolism; myo-inositol degradation into acetyl-CoA; acetyl-CoA from myo-inositol: step 7/7.</text>
</comment>
<comment type="subunit">
    <text evidence="1">Homotetramer.</text>
</comment>
<comment type="similarity">
    <text evidence="1">Belongs to the aldehyde dehydrogenase family. IolA subfamily.</text>
</comment>